<comment type="subcellular location">
    <subcellularLocation>
        <location>Plastid</location>
        <location>Chloroplast</location>
    </subcellularLocation>
</comment>
<comment type="miscellaneous">
    <text>The LH38 protein is synthesized as a 100 kDa polyprotein and is entirely imported into the chloroplast where it is subsequently cleaved into 5 mature 20 kDa LH38 proteins.</text>
</comment>
<accession>P08976</accession>
<keyword id="KW-0150">Chloroplast</keyword>
<keyword id="KW-0602">Photosynthesis</keyword>
<keyword id="KW-0603">Photosystem I</keyword>
<keyword id="KW-0934">Plastid</keyword>
<name>LH18_EUGGR</name>
<reference key="1">
    <citation type="journal article" date="1988" name="Mol. Gen. Genet.">
        <title>Characterization of cDNA sequences for LHCI apoproteins in Euglena gracilis: the mRNA encodes a large precursor containing several consecutive divergent polypeptides.</title>
        <authorList>
            <person name="Houlne G."/>
            <person name="Schantz R."/>
        </authorList>
    </citation>
    <scope>NUCLEOTIDE SEQUENCE [MRNA]</scope>
</reference>
<dbReference type="EMBL" id="X12861">
    <property type="protein sequence ID" value="CAA31338.1"/>
    <property type="molecule type" value="mRNA"/>
</dbReference>
<dbReference type="PIR" id="S01430">
    <property type="entry name" value="S01430"/>
</dbReference>
<dbReference type="SMR" id="P08976"/>
<dbReference type="GO" id="GO:0009507">
    <property type="term" value="C:chloroplast"/>
    <property type="evidence" value="ECO:0007669"/>
    <property type="project" value="UniProtKB-SubCell"/>
</dbReference>
<dbReference type="GO" id="GO:0009522">
    <property type="term" value="C:photosystem I"/>
    <property type="evidence" value="ECO:0007669"/>
    <property type="project" value="UniProtKB-KW"/>
</dbReference>
<dbReference type="GO" id="GO:0009765">
    <property type="term" value="P:photosynthesis, light harvesting"/>
    <property type="evidence" value="ECO:0007669"/>
    <property type="project" value="InterPro"/>
</dbReference>
<dbReference type="Gene3D" id="1.10.3460.10">
    <property type="entry name" value="Chlorophyll a/b binding protein domain"/>
    <property type="match status" value="3"/>
</dbReference>
<dbReference type="InterPro" id="IPR001344">
    <property type="entry name" value="Chloro_AB-bd_pln"/>
</dbReference>
<dbReference type="InterPro" id="IPR022796">
    <property type="entry name" value="Chloroa_b-bind"/>
</dbReference>
<dbReference type="PANTHER" id="PTHR21649">
    <property type="entry name" value="CHLOROPHYLL A/B BINDING PROTEIN"/>
    <property type="match status" value="1"/>
</dbReference>
<dbReference type="Pfam" id="PF00504">
    <property type="entry name" value="Chloroa_b-bind"/>
    <property type="match status" value="3"/>
</dbReference>
<dbReference type="SUPFAM" id="SSF103511">
    <property type="entry name" value="Chlorophyll a-b binding protein"/>
    <property type="match status" value="3"/>
</dbReference>
<protein>
    <recommendedName>
        <fullName>Light-harvesting complex I LH38 proteins</fullName>
    </recommendedName>
    <component>
        <recommendedName>
            <fullName>LH38 protein 1</fullName>
        </recommendedName>
    </component>
    <component>
        <recommendedName>
            <fullName>LH38 protein 2</fullName>
        </recommendedName>
    </component>
    <component>
        <recommendedName>
            <fullName>LH38 protein 3</fullName>
        </recommendedName>
    </component>
</protein>
<sequence>SHPLWFPNTLAPSWLNGEYYGDRGFDPAGLAADPDTFERMRIAEVYHGRLAMLAVVGALVPDYLGKGIWYEAAQNAGIGLKEVAIFTAAYGVFEVARGVKENSDPTTIYPGFDPLNLTTDYTKEAEIKNGRLALTALLGFEVQRHVVGGSPLANLAEHLQQPLQRNIADSIMHQWPVAMFASSGHKDGLWFPNAEPPALLTGEYPADRGFDPLNLAADPDVYARMRVAEVFHGRLAMLCTVGCIVPELLGKGAWFEAGDSVDGLKLGFITMAIAAPTEYWRGQGGFNWQKGELDRSYPGFDPLNLTTDYTRAAEVKNGRLALTAVAGLTAQYLATGESPLANLSAHLANPIGANITTNLAMFASSGAKEERELWFPNIVPPRYLTGEAYGDKGFDPAGLAADPVTFERMQVAEVFHCRLSMLALVGCLVPELLGNGAWFQIWDKVDFNRFAVVALQVVAPLEYWRGNGGFLWNDEETVDQSYPGFDPLNLTTEYTKEAEIKNGRLAMNGMFGLEVQSHVTGKSPINNLID</sequence>
<feature type="chain" id="PRO_0000029340" description="LH38 protein 1">
    <location>
        <begin position="1" status="less than"/>
        <end position="178"/>
    </location>
</feature>
<feature type="chain" id="PRO_0000029341" description="LH38 protein 2">
    <location>
        <begin position="179"/>
        <end position="360"/>
    </location>
</feature>
<feature type="chain" id="PRO_0000029342" description="LH38 protein 3">
    <location>
        <begin position="361"/>
        <end position="530" status="greater than"/>
    </location>
</feature>
<feature type="non-terminal residue">
    <location>
        <position position="1"/>
    </location>
</feature>
<feature type="non-terminal residue">
    <location>
        <position position="530"/>
    </location>
</feature>
<proteinExistence type="evidence at transcript level"/>
<organism>
    <name type="scientific">Euglena gracilis</name>
    <dbReference type="NCBI Taxonomy" id="3039"/>
    <lineage>
        <taxon>Eukaryota</taxon>
        <taxon>Discoba</taxon>
        <taxon>Euglenozoa</taxon>
        <taxon>Euglenida</taxon>
        <taxon>Spirocuta</taxon>
        <taxon>Euglenophyceae</taxon>
        <taxon>Euglenales</taxon>
        <taxon>Euglenaceae</taxon>
        <taxon>Euglena</taxon>
    </lineage>
</organism>